<comment type="catalytic activity">
    <reaction>
        <text>O-phospho-L-seryl-[protein] + H2O = L-seryl-[protein] + phosphate</text>
        <dbReference type="Rhea" id="RHEA:20629"/>
        <dbReference type="Rhea" id="RHEA-COMP:9863"/>
        <dbReference type="Rhea" id="RHEA-COMP:11604"/>
        <dbReference type="ChEBI" id="CHEBI:15377"/>
        <dbReference type="ChEBI" id="CHEBI:29999"/>
        <dbReference type="ChEBI" id="CHEBI:43474"/>
        <dbReference type="ChEBI" id="CHEBI:83421"/>
        <dbReference type="EC" id="3.1.3.16"/>
    </reaction>
</comment>
<comment type="catalytic activity">
    <reaction>
        <text>O-phospho-L-threonyl-[protein] + H2O = L-threonyl-[protein] + phosphate</text>
        <dbReference type="Rhea" id="RHEA:47004"/>
        <dbReference type="Rhea" id="RHEA-COMP:11060"/>
        <dbReference type="Rhea" id="RHEA-COMP:11605"/>
        <dbReference type="ChEBI" id="CHEBI:15377"/>
        <dbReference type="ChEBI" id="CHEBI:30013"/>
        <dbReference type="ChEBI" id="CHEBI:43474"/>
        <dbReference type="ChEBI" id="CHEBI:61977"/>
        <dbReference type="EC" id="3.1.3.16"/>
    </reaction>
</comment>
<comment type="cofactor">
    <cofactor evidence="1">
        <name>Mg(2+)</name>
        <dbReference type="ChEBI" id="CHEBI:18420"/>
    </cofactor>
    <cofactor evidence="1">
        <name>Mn(2+)</name>
        <dbReference type="ChEBI" id="CHEBI:29035"/>
    </cofactor>
    <text evidence="1">Binds 2 magnesium or manganese ions per subunit.</text>
</comment>
<comment type="interaction">
    <interactant intactId="EBI-12814">
        <id>P38089</id>
    </interactant>
    <interactant intactId="EBI-33397">
        <id>Q12447</id>
        <label>PAA1</label>
    </interactant>
    <organismsDiffer>false</organismsDiffer>
    <experiments>6</experiments>
</comment>
<comment type="miscellaneous">
    <text evidence="3">Present with 149 molecules/cell in log phase SD medium.</text>
</comment>
<comment type="similarity">
    <text evidence="4">Belongs to the PP2C family.</text>
</comment>
<keyword id="KW-0378">Hydrolase</keyword>
<keyword id="KW-0460">Magnesium</keyword>
<keyword id="KW-0464">Manganese</keyword>
<keyword id="KW-0479">Metal-binding</keyword>
<keyword id="KW-0904">Protein phosphatase</keyword>
<keyword id="KW-1185">Reference proteome</keyword>
<evidence type="ECO:0000250" key="1"/>
<evidence type="ECO:0000255" key="2">
    <source>
        <dbReference type="PROSITE-ProRule" id="PRU01082"/>
    </source>
</evidence>
<evidence type="ECO:0000269" key="3">
    <source>
    </source>
</evidence>
<evidence type="ECO:0000305" key="4"/>
<gene>
    <name type="primary">PTC4</name>
    <name type="synonym">GCT1</name>
    <name type="ordered locus">YBR125C</name>
    <name type="ORF">YBR0921</name>
</gene>
<feature type="chain" id="PRO_0000057777" description="Protein phosphatase 2C homolog 4">
    <location>
        <begin position="1"/>
        <end position="393"/>
    </location>
</feature>
<feature type="domain" description="PPM-type phosphatase" evidence="2">
    <location>
        <begin position="33"/>
        <end position="368"/>
    </location>
</feature>
<feature type="binding site" evidence="1">
    <location>
        <position position="83"/>
    </location>
    <ligand>
        <name>Mn(2+)</name>
        <dbReference type="ChEBI" id="CHEBI:29035"/>
        <label>1</label>
    </ligand>
</feature>
<feature type="binding site" evidence="1">
    <location>
        <position position="83"/>
    </location>
    <ligand>
        <name>Mn(2+)</name>
        <dbReference type="ChEBI" id="CHEBI:29035"/>
        <label>2</label>
    </ligand>
</feature>
<feature type="binding site" evidence="1">
    <location>
        <position position="84"/>
    </location>
    <ligand>
        <name>Mn(2+)</name>
        <dbReference type="ChEBI" id="CHEBI:29035"/>
        <label>1</label>
    </ligand>
</feature>
<feature type="binding site" evidence="1">
    <location>
        <position position="310"/>
    </location>
    <ligand>
        <name>Mn(2+)</name>
        <dbReference type="ChEBI" id="CHEBI:29035"/>
        <label>2</label>
    </ligand>
</feature>
<feature type="binding site" evidence="1">
    <location>
        <position position="359"/>
    </location>
    <ligand>
        <name>Mn(2+)</name>
        <dbReference type="ChEBI" id="CHEBI:29035"/>
        <label>2</label>
    </ligand>
</feature>
<dbReference type="EC" id="3.1.3.16"/>
<dbReference type="EMBL" id="X78993">
    <property type="protein sequence ID" value="CAA55626.1"/>
    <property type="molecule type" value="Genomic_DNA"/>
</dbReference>
<dbReference type="EMBL" id="Z35994">
    <property type="protein sequence ID" value="CAA85082.1"/>
    <property type="molecule type" value="Genomic_DNA"/>
</dbReference>
<dbReference type="EMBL" id="BK006936">
    <property type="protein sequence ID" value="DAA07242.1"/>
    <property type="molecule type" value="Genomic_DNA"/>
</dbReference>
<dbReference type="PIR" id="S48288">
    <property type="entry name" value="S48288"/>
</dbReference>
<dbReference type="RefSeq" id="NP_009683.1">
    <property type="nucleotide sequence ID" value="NM_001178473.1"/>
</dbReference>
<dbReference type="SMR" id="P38089"/>
<dbReference type="BioGRID" id="32826">
    <property type="interactions" value="217"/>
</dbReference>
<dbReference type="DIP" id="DIP-6437N"/>
<dbReference type="FunCoup" id="P38089">
    <property type="interactions" value="193"/>
</dbReference>
<dbReference type="IntAct" id="P38089">
    <property type="interactions" value="11"/>
</dbReference>
<dbReference type="MINT" id="P38089"/>
<dbReference type="STRING" id="4932.YBR125C"/>
<dbReference type="iPTMnet" id="P38089"/>
<dbReference type="PaxDb" id="4932-YBR125C"/>
<dbReference type="PeptideAtlas" id="P38089"/>
<dbReference type="EnsemblFungi" id="YBR125C_mRNA">
    <property type="protein sequence ID" value="YBR125C"/>
    <property type="gene ID" value="YBR125C"/>
</dbReference>
<dbReference type="GeneID" id="852422"/>
<dbReference type="KEGG" id="sce:YBR125C"/>
<dbReference type="AGR" id="SGD:S000000329"/>
<dbReference type="SGD" id="S000000329">
    <property type="gene designation" value="PTC4"/>
</dbReference>
<dbReference type="VEuPathDB" id="FungiDB:YBR125C"/>
<dbReference type="eggNOG" id="KOG0698">
    <property type="taxonomic scope" value="Eukaryota"/>
</dbReference>
<dbReference type="HOGENOM" id="CLU_013173_4_2_1"/>
<dbReference type="InParanoid" id="P38089"/>
<dbReference type="OMA" id="MQGYRMT"/>
<dbReference type="OrthoDB" id="10264738at2759"/>
<dbReference type="BioCyc" id="YEAST:G3O-29081-MONOMER"/>
<dbReference type="BioGRID-ORCS" id="852422">
    <property type="hits" value="9 hits in 10 CRISPR screens"/>
</dbReference>
<dbReference type="PRO" id="PR:P38089"/>
<dbReference type="Proteomes" id="UP000002311">
    <property type="component" value="Chromosome II"/>
</dbReference>
<dbReference type="RNAct" id="P38089">
    <property type="molecule type" value="protein"/>
</dbReference>
<dbReference type="GO" id="GO:0005737">
    <property type="term" value="C:cytoplasm"/>
    <property type="evidence" value="ECO:0007005"/>
    <property type="project" value="SGD"/>
</dbReference>
<dbReference type="GO" id="GO:0046872">
    <property type="term" value="F:metal ion binding"/>
    <property type="evidence" value="ECO:0007669"/>
    <property type="project" value="UniProtKB-KW"/>
</dbReference>
<dbReference type="GO" id="GO:0004722">
    <property type="term" value="F:protein serine/threonine phosphatase activity"/>
    <property type="evidence" value="ECO:0000314"/>
    <property type="project" value="SGD"/>
</dbReference>
<dbReference type="GO" id="GO:0007165">
    <property type="term" value="P:signal transduction"/>
    <property type="evidence" value="ECO:0000318"/>
    <property type="project" value="GO_Central"/>
</dbReference>
<dbReference type="CDD" id="cd00143">
    <property type="entry name" value="PP2Cc"/>
    <property type="match status" value="1"/>
</dbReference>
<dbReference type="FunFam" id="3.60.40.10:FF:000087">
    <property type="entry name" value="Type 2C protein phosphatase"/>
    <property type="match status" value="1"/>
</dbReference>
<dbReference type="Gene3D" id="3.60.40.10">
    <property type="entry name" value="PPM-type phosphatase domain"/>
    <property type="match status" value="1"/>
</dbReference>
<dbReference type="InterPro" id="IPR015655">
    <property type="entry name" value="PP2C"/>
</dbReference>
<dbReference type="InterPro" id="IPR000222">
    <property type="entry name" value="PP2C_BS"/>
</dbReference>
<dbReference type="InterPro" id="IPR036457">
    <property type="entry name" value="PPM-type-like_dom_sf"/>
</dbReference>
<dbReference type="InterPro" id="IPR001932">
    <property type="entry name" value="PPM-type_phosphatase-like_dom"/>
</dbReference>
<dbReference type="PANTHER" id="PTHR13832:SF803">
    <property type="entry name" value="PROTEIN PHOSPHATASE 1G"/>
    <property type="match status" value="1"/>
</dbReference>
<dbReference type="PANTHER" id="PTHR13832">
    <property type="entry name" value="PROTEIN PHOSPHATASE 2C"/>
    <property type="match status" value="1"/>
</dbReference>
<dbReference type="Pfam" id="PF00481">
    <property type="entry name" value="PP2C"/>
    <property type="match status" value="1"/>
</dbReference>
<dbReference type="SMART" id="SM00332">
    <property type="entry name" value="PP2Cc"/>
    <property type="match status" value="1"/>
</dbReference>
<dbReference type="SUPFAM" id="SSF81606">
    <property type="entry name" value="PP2C-like"/>
    <property type="match status" value="1"/>
</dbReference>
<dbReference type="PROSITE" id="PS01032">
    <property type="entry name" value="PPM_1"/>
    <property type="match status" value="1"/>
</dbReference>
<dbReference type="PROSITE" id="PS51746">
    <property type="entry name" value="PPM_2"/>
    <property type="match status" value="1"/>
</dbReference>
<sequence length="393" mass="44176">MGQLLSHPLTEKTIEYNEYKNNQASTGIVPRFYNCVGSMQGYRLTQEDAHLIRNENSVVYVRFFNPFIDKYETLSLNVFAVFDGHGGDDCSKFLSGGRHHRDGNGSSNGNGEPNAGLIKWIAYSFENHHYTSTTNNDSSKFKRSFNTLEGLVSQIFKDAFILQDEELYRHFANSSCGSTAVVACIINEESLYVANCGDSRCILSSKSNGIKTMSFDHKPQHIGELIRINDNGGTVSLGRVGGVLALSRAFSDFQFKRGVTYPHRRTKLTNITQNLTYGTPPQEAQVTVEPDVLMHKIDYSKDEFLVLACDGIWDIYNNKQLIHFIKYHLVSGTKLDTIITKLLDHGIAQANSNTGVGFDNMTAIIVVLNRKGETLQDWFNKMKTRLERERGLV</sequence>
<protein>
    <recommendedName>
        <fullName>Protein phosphatase 2C homolog 4</fullName>
        <shortName>PP2C-4</shortName>
        <ecNumber>3.1.3.16</ecNumber>
    </recommendedName>
</protein>
<organism>
    <name type="scientific">Saccharomyces cerevisiae (strain ATCC 204508 / S288c)</name>
    <name type="common">Baker's yeast</name>
    <dbReference type="NCBI Taxonomy" id="559292"/>
    <lineage>
        <taxon>Eukaryota</taxon>
        <taxon>Fungi</taxon>
        <taxon>Dikarya</taxon>
        <taxon>Ascomycota</taxon>
        <taxon>Saccharomycotina</taxon>
        <taxon>Saccharomycetes</taxon>
        <taxon>Saccharomycetales</taxon>
        <taxon>Saccharomycetaceae</taxon>
        <taxon>Saccharomyces</taxon>
    </lineage>
</organism>
<accession>P38089</accession>
<accession>D6VQC2</accession>
<name>PP2C4_YEAST</name>
<reference key="1">
    <citation type="journal article" date="1994" name="Yeast">
        <title>Analysis of a 70 kb region on the right arm of yeast chromosome II.</title>
        <authorList>
            <person name="Mannhaupt G."/>
            <person name="Stucka R."/>
            <person name="Ehnle S."/>
            <person name="Vetter I."/>
            <person name="Feldmann H."/>
        </authorList>
    </citation>
    <scope>NUCLEOTIDE SEQUENCE [GENOMIC DNA]</scope>
    <source>
        <strain>ATCC 204508 / S288c</strain>
    </source>
</reference>
<reference key="2">
    <citation type="journal article" date="1994" name="EMBO J.">
        <title>Complete DNA sequence of yeast chromosome II.</title>
        <authorList>
            <person name="Feldmann H."/>
            <person name="Aigle M."/>
            <person name="Aljinovic G."/>
            <person name="Andre B."/>
            <person name="Baclet M.C."/>
            <person name="Barthe C."/>
            <person name="Baur A."/>
            <person name="Becam A.-M."/>
            <person name="Biteau N."/>
            <person name="Boles E."/>
            <person name="Brandt T."/>
            <person name="Brendel M."/>
            <person name="Brueckner M."/>
            <person name="Bussereau F."/>
            <person name="Christiansen C."/>
            <person name="Contreras R."/>
            <person name="Crouzet M."/>
            <person name="Cziepluch C."/>
            <person name="Demolis N."/>
            <person name="Delaveau T."/>
            <person name="Doignon F."/>
            <person name="Domdey H."/>
            <person name="Duesterhus S."/>
            <person name="Dubois E."/>
            <person name="Dujon B."/>
            <person name="El Bakkoury M."/>
            <person name="Entian K.-D."/>
            <person name="Feuermann M."/>
            <person name="Fiers W."/>
            <person name="Fobo G.M."/>
            <person name="Fritz C."/>
            <person name="Gassenhuber J."/>
            <person name="Glansdorff N."/>
            <person name="Goffeau A."/>
            <person name="Grivell L.A."/>
            <person name="de Haan M."/>
            <person name="Hein C."/>
            <person name="Herbert C.J."/>
            <person name="Hollenberg C.P."/>
            <person name="Holmstroem K."/>
            <person name="Jacq C."/>
            <person name="Jacquet M."/>
            <person name="Jauniaux J.-C."/>
            <person name="Jonniaux J.-L."/>
            <person name="Kallesoee T."/>
            <person name="Kiesau P."/>
            <person name="Kirchrath L."/>
            <person name="Koetter P."/>
            <person name="Korol S."/>
            <person name="Liebl S."/>
            <person name="Logghe M."/>
            <person name="Lohan A.J.E."/>
            <person name="Louis E.J."/>
            <person name="Li Z.Y."/>
            <person name="Maat M.J."/>
            <person name="Mallet L."/>
            <person name="Mannhaupt G."/>
            <person name="Messenguy F."/>
            <person name="Miosga T."/>
            <person name="Molemans F."/>
            <person name="Mueller S."/>
            <person name="Nasr F."/>
            <person name="Obermaier B."/>
            <person name="Perea J."/>
            <person name="Pierard A."/>
            <person name="Piravandi E."/>
            <person name="Pohl F.M."/>
            <person name="Pohl T.M."/>
            <person name="Potier S."/>
            <person name="Proft M."/>
            <person name="Purnelle B."/>
            <person name="Ramezani Rad M."/>
            <person name="Rieger M."/>
            <person name="Rose M."/>
            <person name="Schaaff-Gerstenschlaeger I."/>
            <person name="Scherens B."/>
            <person name="Schwarzlose C."/>
            <person name="Skala J."/>
            <person name="Slonimski P.P."/>
            <person name="Smits P.H.M."/>
            <person name="Souciet J.-L."/>
            <person name="Steensma H.Y."/>
            <person name="Stucka R."/>
            <person name="Urrestarazu L.A."/>
            <person name="van der Aart Q.J.M."/>
            <person name="Van Dyck L."/>
            <person name="Vassarotti A."/>
            <person name="Vetter I."/>
            <person name="Vierendeels F."/>
            <person name="Vissers S."/>
            <person name="Wagner G."/>
            <person name="de Wergifosse P."/>
            <person name="Wolfe K.H."/>
            <person name="Zagulski M."/>
            <person name="Zimmermann F.K."/>
            <person name="Mewes H.-W."/>
            <person name="Kleine K."/>
        </authorList>
    </citation>
    <scope>NUCLEOTIDE SEQUENCE [LARGE SCALE GENOMIC DNA]</scope>
    <source>
        <strain>ATCC 204508 / S288c</strain>
    </source>
</reference>
<reference key="3">
    <citation type="journal article" date="2014" name="G3 (Bethesda)">
        <title>The reference genome sequence of Saccharomyces cerevisiae: Then and now.</title>
        <authorList>
            <person name="Engel S.R."/>
            <person name="Dietrich F.S."/>
            <person name="Fisk D.G."/>
            <person name="Binkley G."/>
            <person name="Balakrishnan R."/>
            <person name="Costanzo M.C."/>
            <person name="Dwight S.S."/>
            <person name="Hitz B.C."/>
            <person name="Karra K."/>
            <person name="Nash R.S."/>
            <person name="Weng S."/>
            <person name="Wong E.D."/>
            <person name="Lloyd P."/>
            <person name="Skrzypek M.S."/>
            <person name="Miyasato S.R."/>
            <person name="Simison M."/>
            <person name="Cherry J.M."/>
        </authorList>
    </citation>
    <scope>GENOME REANNOTATION</scope>
    <source>
        <strain>ATCC 204508 / S288c</strain>
    </source>
</reference>
<reference key="4">
    <citation type="journal article" date="2003" name="Nature">
        <title>Global analysis of protein expression in yeast.</title>
        <authorList>
            <person name="Ghaemmaghami S."/>
            <person name="Huh W.-K."/>
            <person name="Bower K."/>
            <person name="Howson R.W."/>
            <person name="Belle A."/>
            <person name="Dephoure N."/>
            <person name="O'Shea E.K."/>
            <person name="Weissman J.S."/>
        </authorList>
    </citation>
    <scope>LEVEL OF PROTEIN EXPRESSION [LARGE SCALE ANALYSIS]</scope>
</reference>
<proteinExistence type="evidence at protein level"/>